<accession>Q9NPJ4</accession>
<accession>B4DU72</accession>
<evidence type="ECO:0000250" key="1">
    <source>
        <dbReference type="UniProtKB" id="Q9CR73"/>
    </source>
</evidence>
<evidence type="ECO:0000256" key="2">
    <source>
        <dbReference type="SAM" id="MobiDB-lite"/>
    </source>
</evidence>
<evidence type="ECO:0000269" key="3">
    <source>
    </source>
</evidence>
<evidence type="ECO:0000269" key="4">
    <source>
    </source>
</evidence>
<evidence type="ECO:0000269" key="5">
    <source>
    </source>
</evidence>
<evidence type="ECO:0000269" key="6">
    <source>
    </source>
</evidence>
<evidence type="ECO:0000303" key="7">
    <source>
    </source>
</evidence>
<evidence type="ECO:0000305" key="8"/>
<evidence type="ECO:0007829" key="9">
    <source>
        <dbReference type="PDB" id="5KQ4"/>
    </source>
</evidence>
<keyword id="KW-0002">3D-structure</keyword>
<keyword id="KW-0010">Activator</keyword>
<keyword id="KW-0025">Alternative splicing</keyword>
<keyword id="KW-0963">Cytoplasm</keyword>
<keyword id="KW-0866">Nonsense-mediated mRNA decay</keyword>
<keyword id="KW-0539">Nucleus</keyword>
<keyword id="KW-1267">Proteomics identification</keyword>
<keyword id="KW-1185">Reference proteome</keyword>
<keyword id="KW-0804">Transcription</keyword>
<keyword id="KW-0805">Transcription regulation</keyword>
<protein>
    <recommendedName>
        <fullName>Proline-rich nuclear receptor coactivator 2</fullName>
    </recommendedName>
</protein>
<dbReference type="EMBL" id="AF374386">
    <property type="protein sequence ID" value="AAK54613.1"/>
    <property type="molecule type" value="mRNA"/>
</dbReference>
<dbReference type="EMBL" id="AF151042">
    <property type="protein sequence ID" value="AAF36128.1"/>
    <property type="molecule type" value="mRNA"/>
</dbReference>
<dbReference type="EMBL" id="AK000319">
    <property type="protein sequence ID" value="BAA91082.1"/>
    <property type="molecule type" value="mRNA"/>
</dbReference>
<dbReference type="EMBL" id="AK300522">
    <property type="protein sequence ID" value="BAG62234.1"/>
    <property type="molecule type" value="mRNA"/>
</dbReference>
<dbReference type="EMBL" id="AL590609">
    <property type="status" value="NOT_ANNOTATED_CDS"/>
    <property type="molecule type" value="Genomic_DNA"/>
</dbReference>
<dbReference type="EMBL" id="BC001959">
    <property type="protein sequence ID" value="AAH01959.1"/>
    <property type="molecule type" value="mRNA"/>
</dbReference>
<dbReference type="EMBL" id="BC078177">
    <property type="protein sequence ID" value="AAH78177.1"/>
    <property type="molecule type" value="mRNA"/>
</dbReference>
<dbReference type="EMBL" id="BC085018">
    <property type="protein sequence ID" value="AAH85018.1"/>
    <property type="molecule type" value="mRNA"/>
</dbReference>
<dbReference type="CCDS" id="CCDS246.1">
    <molecule id="Q9NPJ4-1"/>
</dbReference>
<dbReference type="RefSeq" id="NP_060231.1">
    <molecule id="Q9NPJ4-1"/>
    <property type="nucleotide sequence ID" value="NM_017761.4"/>
</dbReference>
<dbReference type="RefSeq" id="XP_016857180.1">
    <molecule id="Q9NPJ4-1"/>
    <property type="nucleotide sequence ID" value="XM_017001691.1"/>
</dbReference>
<dbReference type="PDB" id="4B6H">
    <property type="method" value="X-ray"/>
    <property type="resolution" value="2.60 A"/>
    <property type="chains" value="C/D=1-121"/>
</dbReference>
<dbReference type="PDB" id="5KQ1">
    <property type="method" value="X-ray"/>
    <property type="resolution" value="3.00 A"/>
    <property type="chains" value="C/F=91-121"/>
</dbReference>
<dbReference type="PDB" id="5KQ4">
    <property type="method" value="X-ray"/>
    <property type="resolution" value="2.56 A"/>
    <property type="chains" value="C/F=91-121"/>
</dbReference>
<dbReference type="PDBsum" id="4B6H"/>
<dbReference type="PDBsum" id="5KQ1"/>
<dbReference type="PDBsum" id="5KQ4"/>
<dbReference type="SMR" id="Q9NPJ4"/>
<dbReference type="BioGRID" id="120768">
    <property type="interactions" value="32"/>
</dbReference>
<dbReference type="CORUM" id="Q9NPJ4"/>
<dbReference type="DIP" id="DIP-41328N"/>
<dbReference type="FunCoup" id="Q9NPJ4">
    <property type="interactions" value="3282"/>
</dbReference>
<dbReference type="IntAct" id="Q9NPJ4">
    <property type="interactions" value="25"/>
</dbReference>
<dbReference type="MINT" id="Q9NPJ4"/>
<dbReference type="STRING" id="9606.ENSP00000497590"/>
<dbReference type="iPTMnet" id="Q9NPJ4"/>
<dbReference type="PhosphoSitePlus" id="Q9NPJ4"/>
<dbReference type="BioMuta" id="PNRC2"/>
<dbReference type="jPOST" id="Q9NPJ4"/>
<dbReference type="MassIVE" id="Q9NPJ4"/>
<dbReference type="PaxDb" id="9606-ENSP00000334840"/>
<dbReference type="PeptideAtlas" id="Q9NPJ4"/>
<dbReference type="ProteomicsDB" id="82026">
    <molecule id="Q9NPJ4-1"/>
</dbReference>
<dbReference type="ProteomicsDB" id="82027">
    <molecule id="Q9NPJ4-2"/>
</dbReference>
<dbReference type="Antibodypedia" id="49958">
    <property type="antibodies" value="102 antibodies from 20 providers"/>
</dbReference>
<dbReference type="DNASU" id="55629"/>
<dbReference type="Ensembl" id="ENST00000334351.8">
    <molecule id="Q9NPJ4-1"/>
    <property type="protein sequence ID" value="ENSP00000334840.7"/>
    <property type="gene ID" value="ENSG00000189266.13"/>
</dbReference>
<dbReference type="Ensembl" id="ENST00000374468.1">
    <molecule id="Q9NPJ4-1"/>
    <property type="protein sequence ID" value="ENSP00000363592.1"/>
    <property type="gene ID" value="ENSG00000189266.13"/>
</dbReference>
<dbReference type="Ensembl" id="ENST00000647887.1">
    <molecule id="Q9NPJ4-1"/>
    <property type="protein sequence ID" value="ENSP00000497590.1"/>
    <property type="gene ID" value="ENSG00000189266.13"/>
</dbReference>
<dbReference type="GeneID" id="55629"/>
<dbReference type="KEGG" id="hsa:55629"/>
<dbReference type="MANE-Select" id="ENST00000334351.8">
    <property type="protein sequence ID" value="ENSP00000334840.7"/>
    <property type="RefSeq nucleotide sequence ID" value="NM_017761.4"/>
    <property type="RefSeq protein sequence ID" value="NP_060231.1"/>
</dbReference>
<dbReference type="UCSC" id="uc001big.4">
    <molecule id="Q9NPJ4-1"/>
    <property type="organism name" value="human"/>
</dbReference>
<dbReference type="AGR" id="HGNC:23158"/>
<dbReference type="CTD" id="55629"/>
<dbReference type="DisGeNET" id="55629"/>
<dbReference type="GeneCards" id="PNRC2"/>
<dbReference type="HGNC" id="HGNC:23158">
    <property type="gene designation" value="PNRC2"/>
</dbReference>
<dbReference type="HPA" id="ENSG00000189266">
    <property type="expression patterns" value="Low tissue specificity"/>
</dbReference>
<dbReference type="MIM" id="611882">
    <property type="type" value="gene"/>
</dbReference>
<dbReference type="neXtProt" id="NX_Q9NPJ4"/>
<dbReference type="OpenTargets" id="ENSG00000189266"/>
<dbReference type="PharmGKB" id="PA134931421"/>
<dbReference type="VEuPathDB" id="HostDB:ENSG00000189266"/>
<dbReference type="eggNOG" id="ENOG502RZZX">
    <property type="taxonomic scope" value="Eukaryota"/>
</dbReference>
<dbReference type="GeneTree" id="ENSGT00530000063881"/>
<dbReference type="HOGENOM" id="CLU_086541_1_0_1"/>
<dbReference type="InParanoid" id="Q9NPJ4"/>
<dbReference type="OMA" id="RNTTKNH"/>
<dbReference type="OrthoDB" id="8732832at2759"/>
<dbReference type="PAN-GO" id="Q9NPJ4">
    <property type="GO annotations" value="3 GO annotations based on evolutionary models"/>
</dbReference>
<dbReference type="PhylomeDB" id="Q9NPJ4"/>
<dbReference type="TreeFam" id="TF333211"/>
<dbReference type="PathwayCommons" id="Q9NPJ4"/>
<dbReference type="Reactome" id="R-HSA-975957">
    <property type="pathway name" value="Nonsense Mediated Decay (NMD) enhanced by the Exon Junction Complex (EJC)"/>
</dbReference>
<dbReference type="SignaLink" id="Q9NPJ4"/>
<dbReference type="BioGRID-ORCS" id="55629">
    <property type="hits" value="40 hits in 1109 CRISPR screens"/>
</dbReference>
<dbReference type="CD-CODE" id="232F8A39">
    <property type="entry name" value="P-body"/>
</dbReference>
<dbReference type="ChiTaRS" id="PNRC2">
    <property type="organism name" value="human"/>
</dbReference>
<dbReference type="GeneWiki" id="PNRC2"/>
<dbReference type="GenomeRNAi" id="55629"/>
<dbReference type="Pharos" id="Q9NPJ4">
    <property type="development level" value="Tbio"/>
</dbReference>
<dbReference type="PRO" id="PR:Q9NPJ4"/>
<dbReference type="Proteomes" id="UP000005640">
    <property type="component" value="Chromosome 1"/>
</dbReference>
<dbReference type="RNAct" id="Q9NPJ4">
    <property type="molecule type" value="protein"/>
</dbReference>
<dbReference type="Bgee" id="ENSG00000189266">
    <property type="expression patterns" value="Expressed in germinal epithelium of ovary and 206 other cell types or tissues"/>
</dbReference>
<dbReference type="ExpressionAtlas" id="Q9NPJ4">
    <property type="expression patterns" value="baseline and differential"/>
</dbReference>
<dbReference type="GO" id="GO:0005829">
    <property type="term" value="C:cytosol"/>
    <property type="evidence" value="ECO:0000304"/>
    <property type="project" value="Reactome"/>
</dbReference>
<dbReference type="GO" id="GO:0005794">
    <property type="term" value="C:Golgi apparatus"/>
    <property type="evidence" value="ECO:0000314"/>
    <property type="project" value="HPA"/>
</dbReference>
<dbReference type="GO" id="GO:0005654">
    <property type="term" value="C:nucleoplasm"/>
    <property type="evidence" value="ECO:0000314"/>
    <property type="project" value="HPA"/>
</dbReference>
<dbReference type="GO" id="GO:0005634">
    <property type="term" value="C:nucleus"/>
    <property type="evidence" value="ECO:0000314"/>
    <property type="project" value="UniProtKB"/>
</dbReference>
<dbReference type="GO" id="GO:0000932">
    <property type="term" value="C:P-body"/>
    <property type="evidence" value="ECO:0000314"/>
    <property type="project" value="UniProtKB"/>
</dbReference>
<dbReference type="GO" id="GO:0031087">
    <property type="term" value="P:deadenylation-independent decapping of nuclear-transcribed mRNA"/>
    <property type="evidence" value="ECO:0000304"/>
    <property type="project" value="UniProtKB"/>
</dbReference>
<dbReference type="GO" id="GO:0000184">
    <property type="term" value="P:nuclear-transcribed mRNA catabolic process, nonsense-mediated decay"/>
    <property type="evidence" value="ECO:0000314"/>
    <property type="project" value="UniProtKB"/>
</dbReference>
<dbReference type="InterPro" id="IPR028322">
    <property type="entry name" value="PNRC-like_rgn"/>
</dbReference>
<dbReference type="InterPro" id="IPR026780">
    <property type="entry name" value="PNRC1/2"/>
</dbReference>
<dbReference type="PANTHER" id="PTHR15405">
    <property type="entry name" value="PROLINE-RICH NUCLEAR RECEPTOR COACTIVATOR"/>
    <property type="match status" value="1"/>
</dbReference>
<dbReference type="Pfam" id="PF15365">
    <property type="entry name" value="PNRC"/>
    <property type="match status" value="1"/>
</dbReference>
<comment type="function">
    <text evidence="1 3 5 6">Involved in nonsense-mediated mRNA decay (NMD) by acting as a bridge between the mRNA decapping complex and the NMD machinery (PubMed:19150429). May act by targeting the NMD machinery to the P-body and recruiting the decapping machinery to aberrant mRNAs (PubMed:19150429). Required for UPF1/RENT1 localization to the P-body (PubMed:19150429). Plays a role in glucocorticoid receptor-mediated mRNA degradation by interacting with the glucocorticoid receptor NR3C1 in a ligand-dependent manner when it is bound to the 5' UTR of target mRNAs and recruiting the RNA helicase UPF1 and the mRNA-decapping enzyme DCP1A, leading to RNA decay (PubMed:25775514). Also acts as a nuclear receptor coactivator (PubMed:11574675). May play a role in controlling the energy balance between energy storage and energy expenditure (By similarity).</text>
</comment>
<comment type="subunit">
    <text evidence="3 4 5 6">Interacts with UPF1/RENT1; preferentially interacts with hyperphosphorylated form (PubMed:19150429, PubMed:25775514). Interacts with DCP1A (PubMed:19150429, PubMed:25775514). Interacts with many nuclear receptors including ESR1, ESRRA, ESRRG, NR3C1/GR, NR5A1, PGR, TR, RAR and RXR (PubMed:11574675, PubMed:14651967, PubMed:25775514).</text>
</comment>
<comment type="interaction">
    <interactant intactId="EBI-726549">
        <id>Q9NPJ4</id>
    </interactant>
    <interactant intactId="EBI-11524452">
        <id>Q8N9N5-2</id>
        <label>BANP</label>
    </interactant>
    <organismsDiffer>false</organismsDiffer>
    <experiments>3</experiments>
</comment>
<comment type="interaction">
    <interactant intactId="EBI-726549">
        <id>Q9NPJ4</id>
    </interactant>
    <interactant intactId="EBI-374238">
        <id>Q9NPI6</id>
        <label>DCP1A</label>
    </interactant>
    <organismsDiffer>false</organismsDiffer>
    <experiments>12</experiments>
</comment>
<comment type="interaction">
    <interactant intactId="EBI-726549">
        <id>Q9NPJ4</id>
    </interactant>
    <interactant intactId="EBI-12001340">
        <id>P62508-3</id>
        <label>ESRRG</label>
    </interactant>
    <organismsDiffer>false</organismsDiffer>
    <experiments>3</experiments>
</comment>
<comment type="interaction">
    <interactant intactId="EBI-726549">
        <id>Q9NPJ4</id>
    </interactant>
    <interactant intactId="EBI-2269932">
        <id>P51570</id>
        <label>GALK1</label>
    </interactant>
    <organismsDiffer>false</organismsDiffer>
    <experiments>3</experiments>
</comment>
<comment type="interaction">
    <interactant intactId="EBI-726549">
        <id>Q9NPJ4</id>
    </interactant>
    <interactant intactId="EBI-373471">
        <id>Q92900</id>
        <label>UPF1</label>
    </interactant>
    <organismsDiffer>false</organismsDiffer>
    <experiments>9</experiments>
</comment>
<comment type="interaction">
    <interactant intactId="EBI-16018718">
        <id>Q9NPJ4-1</id>
    </interactant>
    <interactant intactId="EBI-374238">
        <id>Q9NPI6</id>
        <label>DCP1A</label>
    </interactant>
    <organismsDiffer>false</organismsDiffer>
    <experiments>6</experiments>
</comment>
<comment type="subcellular location">
    <subcellularLocation>
        <location evidence="5">Nucleus</location>
    </subcellularLocation>
    <subcellularLocation>
        <location evidence="5">Cytoplasm</location>
        <location evidence="5">P-body</location>
    </subcellularLocation>
</comment>
<comment type="alternative products">
    <event type="alternative splicing"/>
    <isoform>
        <id>Q9NPJ4-1</id>
        <name>1</name>
        <sequence type="displayed"/>
    </isoform>
    <isoform>
        <id>Q9NPJ4-2</id>
        <name>2</name>
        <sequence type="described" ref="VSP_037463"/>
    </isoform>
</comment>
<comment type="tissue specificity">
    <text evidence="3">Expressed in heart, lung, muscle and brain.</text>
</comment>
<comment type="domain">
    <text evidence="3">The interaction between PNRC2 and nuclear receptors is dependent on the SH3 binding motif.</text>
</comment>
<comment type="similarity">
    <text evidence="8">Belongs to the PNRC family. PNRC2 subfamily.</text>
</comment>
<reference key="1">
    <citation type="journal article" date="2001" name="Nucleic Acids Res.">
        <title>PNRC2 is a 16 kDa coactivator that interacts with nuclear receptors through an SH3-binding motif.</title>
        <authorList>
            <person name="Zhou D."/>
            <person name="Chen S."/>
        </authorList>
    </citation>
    <scope>NUCLEOTIDE SEQUENCE [MRNA] (ISOFORM 1)</scope>
    <scope>FUNCTION</scope>
    <scope>TISSUE SPECIFICITY</scope>
    <scope>DOMAIN</scope>
    <scope>MUTAGENESIS OF PRO-101 AND PRO-104</scope>
    <scope>INTERACTION WITH ESR1; ESRRA; NR3C1; NR5A1; PGR; TR; RAR AND RXR</scope>
</reference>
<reference key="2">
    <citation type="journal article" date="2000" name="Genome Res.">
        <title>Cloning and functional analysis of cDNAs with open reading frames for 300 previously undefined genes expressed in CD34+ hematopoietic stem/progenitor cells.</title>
        <authorList>
            <person name="Zhang Q.-H."/>
            <person name="Ye M."/>
            <person name="Wu X.-Y."/>
            <person name="Ren S.-X."/>
            <person name="Zhao M."/>
            <person name="Zhao C.-J."/>
            <person name="Fu G."/>
            <person name="Shen Y."/>
            <person name="Fan H.-Y."/>
            <person name="Lu G."/>
            <person name="Zhong M."/>
            <person name="Xu X.-R."/>
            <person name="Han Z.-G."/>
            <person name="Zhang J.-W."/>
            <person name="Tao J."/>
            <person name="Huang Q.-H."/>
            <person name="Zhou J."/>
            <person name="Hu G.-X."/>
            <person name="Gu J."/>
            <person name="Chen S.-J."/>
            <person name="Chen Z."/>
        </authorList>
    </citation>
    <scope>NUCLEOTIDE SEQUENCE [LARGE SCALE MRNA] (ISOFORM 1)</scope>
    <source>
        <tissue>Umbilical cord blood</tissue>
    </source>
</reference>
<reference key="3">
    <citation type="journal article" date="2004" name="Nat. Genet.">
        <title>Complete sequencing and characterization of 21,243 full-length human cDNAs.</title>
        <authorList>
            <person name="Ota T."/>
            <person name="Suzuki Y."/>
            <person name="Nishikawa T."/>
            <person name="Otsuki T."/>
            <person name="Sugiyama T."/>
            <person name="Irie R."/>
            <person name="Wakamatsu A."/>
            <person name="Hayashi K."/>
            <person name="Sato H."/>
            <person name="Nagai K."/>
            <person name="Kimura K."/>
            <person name="Makita H."/>
            <person name="Sekine M."/>
            <person name="Obayashi M."/>
            <person name="Nishi T."/>
            <person name="Shibahara T."/>
            <person name="Tanaka T."/>
            <person name="Ishii S."/>
            <person name="Yamamoto J."/>
            <person name="Saito K."/>
            <person name="Kawai Y."/>
            <person name="Isono Y."/>
            <person name="Nakamura Y."/>
            <person name="Nagahari K."/>
            <person name="Murakami K."/>
            <person name="Yasuda T."/>
            <person name="Iwayanagi T."/>
            <person name="Wagatsuma M."/>
            <person name="Shiratori A."/>
            <person name="Sudo H."/>
            <person name="Hosoiri T."/>
            <person name="Kaku Y."/>
            <person name="Kodaira H."/>
            <person name="Kondo H."/>
            <person name="Sugawara M."/>
            <person name="Takahashi M."/>
            <person name="Kanda K."/>
            <person name="Yokoi T."/>
            <person name="Furuya T."/>
            <person name="Kikkawa E."/>
            <person name="Omura Y."/>
            <person name="Abe K."/>
            <person name="Kamihara K."/>
            <person name="Katsuta N."/>
            <person name="Sato K."/>
            <person name="Tanikawa M."/>
            <person name="Yamazaki M."/>
            <person name="Ninomiya K."/>
            <person name="Ishibashi T."/>
            <person name="Yamashita H."/>
            <person name="Murakawa K."/>
            <person name="Fujimori K."/>
            <person name="Tanai H."/>
            <person name="Kimata M."/>
            <person name="Watanabe M."/>
            <person name="Hiraoka S."/>
            <person name="Chiba Y."/>
            <person name="Ishida S."/>
            <person name="Ono Y."/>
            <person name="Takiguchi S."/>
            <person name="Watanabe S."/>
            <person name="Yosida M."/>
            <person name="Hotuta T."/>
            <person name="Kusano J."/>
            <person name="Kanehori K."/>
            <person name="Takahashi-Fujii A."/>
            <person name="Hara H."/>
            <person name="Tanase T.-O."/>
            <person name="Nomura Y."/>
            <person name="Togiya S."/>
            <person name="Komai F."/>
            <person name="Hara R."/>
            <person name="Takeuchi K."/>
            <person name="Arita M."/>
            <person name="Imose N."/>
            <person name="Musashino K."/>
            <person name="Yuuki H."/>
            <person name="Oshima A."/>
            <person name="Sasaki N."/>
            <person name="Aotsuka S."/>
            <person name="Yoshikawa Y."/>
            <person name="Matsunawa H."/>
            <person name="Ichihara T."/>
            <person name="Shiohata N."/>
            <person name="Sano S."/>
            <person name="Moriya S."/>
            <person name="Momiyama H."/>
            <person name="Satoh N."/>
            <person name="Takami S."/>
            <person name="Terashima Y."/>
            <person name="Suzuki O."/>
            <person name="Nakagawa S."/>
            <person name="Senoh A."/>
            <person name="Mizoguchi H."/>
            <person name="Goto Y."/>
            <person name="Shimizu F."/>
            <person name="Wakebe H."/>
            <person name="Hishigaki H."/>
            <person name="Watanabe T."/>
            <person name="Sugiyama A."/>
            <person name="Takemoto M."/>
            <person name="Kawakami B."/>
            <person name="Yamazaki M."/>
            <person name="Watanabe K."/>
            <person name="Kumagai A."/>
            <person name="Itakura S."/>
            <person name="Fukuzumi Y."/>
            <person name="Fujimori Y."/>
            <person name="Komiyama M."/>
            <person name="Tashiro H."/>
            <person name="Tanigami A."/>
            <person name="Fujiwara T."/>
            <person name="Ono T."/>
            <person name="Yamada K."/>
            <person name="Fujii Y."/>
            <person name="Ozaki K."/>
            <person name="Hirao M."/>
            <person name="Ohmori Y."/>
            <person name="Kawabata A."/>
            <person name="Hikiji T."/>
            <person name="Kobatake N."/>
            <person name="Inagaki H."/>
            <person name="Ikema Y."/>
            <person name="Okamoto S."/>
            <person name="Okitani R."/>
            <person name="Kawakami T."/>
            <person name="Noguchi S."/>
            <person name="Itoh T."/>
            <person name="Shigeta K."/>
            <person name="Senba T."/>
            <person name="Matsumura K."/>
            <person name="Nakajima Y."/>
            <person name="Mizuno T."/>
            <person name="Morinaga M."/>
            <person name="Sasaki M."/>
            <person name="Togashi T."/>
            <person name="Oyama M."/>
            <person name="Hata H."/>
            <person name="Watanabe M."/>
            <person name="Komatsu T."/>
            <person name="Mizushima-Sugano J."/>
            <person name="Satoh T."/>
            <person name="Shirai Y."/>
            <person name="Takahashi Y."/>
            <person name="Nakagawa K."/>
            <person name="Okumura K."/>
            <person name="Nagase T."/>
            <person name="Nomura N."/>
            <person name="Kikuchi H."/>
            <person name="Masuho Y."/>
            <person name="Yamashita R."/>
            <person name="Nakai K."/>
            <person name="Yada T."/>
            <person name="Nakamura Y."/>
            <person name="Ohara O."/>
            <person name="Isogai T."/>
            <person name="Sugano S."/>
        </authorList>
    </citation>
    <scope>NUCLEOTIDE SEQUENCE [LARGE SCALE MRNA] (ISOFORMS 1 AND 2)</scope>
    <source>
        <tissue>Prostate</tissue>
    </source>
</reference>
<reference key="4">
    <citation type="journal article" date="2006" name="Nature">
        <title>The DNA sequence and biological annotation of human chromosome 1.</title>
        <authorList>
            <person name="Gregory S.G."/>
            <person name="Barlow K.F."/>
            <person name="McLay K.E."/>
            <person name="Kaul R."/>
            <person name="Swarbreck D."/>
            <person name="Dunham A."/>
            <person name="Scott C.E."/>
            <person name="Howe K.L."/>
            <person name="Woodfine K."/>
            <person name="Spencer C.C.A."/>
            <person name="Jones M.C."/>
            <person name="Gillson C."/>
            <person name="Searle S."/>
            <person name="Zhou Y."/>
            <person name="Kokocinski F."/>
            <person name="McDonald L."/>
            <person name="Evans R."/>
            <person name="Phillips K."/>
            <person name="Atkinson A."/>
            <person name="Cooper R."/>
            <person name="Jones C."/>
            <person name="Hall R.E."/>
            <person name="Andrews T.D."/>
            <person name="Lloyd C."/>
            <person name="Ainscough R."/>
            <person name="Almeida J.P."/>
            <person name="Ambrose K.D."/>
            <person name="Anderson F."/>
            <person name="Andrew R.W."/>
            <person name="Ashwell R.I.S."/>
            <person name="Aubin K."/>
            <person name="Babbage A.K."/>
            <person name="Bagguley C.L."/>
            <person name="Bailey J."/>
            <person name="Beasley H."/>
            <person name="Bethel G."/>
            <person name="Bird C.P."/>
            <person name="Bray-Allen S."/>
            <person name="Brown J.Y."/>
            <person name="Brown A.J."/>
            <person name="Buckley D."/>
            <person name="Burton J."/>
            <person name="Bye J."/>
            <person name="Carder C."/>
            <person name="Chapman J.C."/>
            <person name="Clark S.Y."/>
            <person name="Clarke G."/>
            <person name="Clee C."/>
            <person name="Cobley V."/>
            <person name="Collier R.E."/>
            <person name="Corby N."/>
            <person name="Coville G.J."/>
            <person name="Davies J."/>
            <person name="Deadman R."/>
            <person name="Dunn M."/>
            <person name="Earthrowl M."/>
            <person name="Ellington A.G."/>
            <person name="Errington H."/>
            <person name="Frankish A."/>
            <person name="Frankland J."/>
            <person name="French L."/>
            <person name="Garner P."/>
            <person name="Garnett J."/>
            <person name="Gay L."/>
            <person name="Ghori M.R.J."/>
            <person name="Gibson R."/>
            <person name="Gilby L.M."/>
            <person name="Gillett W."/>
            <person name="Glithero R.J."/>
            <person name="Grafham D.V."/>
            <person name="Griffiths C."/>
            <person name="Griffiths-Jones S."/>
            <person name="Grocock R."/>
            <person name="Hammond S."/>
            <person name="Harrison E.S.I."/>
            <person name="Hart E."/>
            <person name="Haugen E."/>
            <person name="Heath P.D."/>
            <person name="Holmes S."/>
            <person name="Holt K."/>
            <person name="Howden P.J."/>
            <person name="Hunt A.R."/>
            <person name="Hunt S.E."/>
            <person name="Hunter G."/>
            <person name="Isherwood J."/>
            <person name="James R."/>
            <person name="Johnson C."/>
            <person name="Johnson D."/>
            <person name="Joy A."/>
            <person name="Kay M."/>
            <person name="Kershaw J.K."/>
            <person name="Kibukawa M."/>
            <person name="Kimberley A.M."/>
            <person name="King A."/>
            <person name="Knights A.J."/>
            <person name="Lad H."/>
            <person name="Laird G."/>
            <person name="Lawlor S."/>
            <person name="Leongamornlert D.A."/>
            <person name="Lloyd D.M."/>
            <person name="Loveland J."/>
            <person name="Lovell J."/>
            <person name="Lush M.J."/>
            <person name="Lyne R."/>
            <person name="Martin S."/>
            <person name="Mashreghi-Mohammadi M."/>
            <person name="Matthews L."/>
            <person name="Matthews N.S.W."/>
            <person name="McLaren S."/>
            <person name="Milne S."/>
            <person name="Mistry S."/>
            <person name="Moore M.J.F."/>
            <person name="Nickerson T."/>
            <person name="O'Dell C.N."/>
            <person name="Oliver K."/>
            <person name="Palmeiri A."/>
            <person name="Palmer S.A."/>
            <person name="Parker A."/>
            <person name="Patel D."/>
            <person name="Pearce A.V."/>
            <person name="Peck A.I."/>
            <person name="Pelan S."/>
            <person name="Phelps K."/>
            <person name="Phillimore B.J."/>
            <person name="Plumb R."/>
            <person name="Rajan J."/>
            <person name="Raymond C."/>
            <person name="Rouse G."/>
            <person name="Saenphimmachak C."/>
            <person name="Sehra H.K."/>
            <person name="Sheridan E."/>
            <person name="Shownkeen R."/>
            <person name="Sims S."/>
            <person name="Skuce C.D."/>
            <person name="Smith M."/>
            <person name="Steward C."/>
            <person name="Subramanian S."/>
            <person name="Sycamore N."/>
            <person name="Tracey A."/>
            <person name="Tromans A."/>
            <person name="Van Helmond Z."/>
            <person name="Wall M."/>
            <person name="Wallis J.M."/>
            <person name="White S."/>
            <person name="Whitehead S.L."/>
            <person name="Wilkinson J.E."/>
            <person name="Willey D.L."/>
            <person name="Williams H."/>
            <person name="Wilming L."/>
            <person name="Wray P.W."/>
            <person name="Wu Z."/>
            <person name="Coulson A."/>
            <person name="Vaudin M."/>
            <person name="Sulston J.E."/>
            <person name="Durbin R.M."/>
            <person name="Hubbard T."/>
            <person name="Wooster R."/>
            <person name="Dunham I."/>
            <person name="Carter N.P."/>
            <person name="McVean G."/>
            <person name="Ross M.T."/>
            <person name="Harrow J."/>
            <person name="Olson M.V."/>
            <person name="Beck S."/>
            <person name="Rogers J."/>
            <person name="Bentley D.R."/>
        </authorList>
    </citation>
    <scope>NUCLEOTIDE SEQUENCE [LARGE SCALE GENOMIC DNA]</scope>
</reference>
<reference key="5">
    <citation type="journal article" date="2004" name="Genome Res.">
        <title>The status, quality, and expansion of the NIH full-length cDNA project: the Mammalian Gene Collection (MGC).</title>
        <authorList>
            <consortium name="The MGC Project Team"/>
        </authorList>
    </citation>
    <scope>NUCLEOTIDE SEQUENCE [LARGE SCALE MRNA] (ISOFORM 1)</scope>
    <source>
        <tissue>Lung</tissue>
        <tissue>Ovary</tissue>
        <tissue>Uterus</tissue>
    </source>
</reference>
<reference key="6">
    <citation type="journal article" date="2003" name="Biochem. Biophys. Res. Commun.">
        <title>Identification of PNRC2 and TLE1 as activation function-1 cofactors of the orphan nuclear receptor ERRgamma.</title>
        <authorList>
            <person name="Hentschke M."/>
            <person name="Borgmeyer U."/>
        </authorList>
    </citation>
    <scope>INTERACTION WITH ESRRG</scope>
</reference>
<reference key="7">
    <citation type="journal article" date="2009" name="Mol. Cell">
        <title>Human proline-rich nuclear receptor coregulatory protein 2 mediates an interaction between mRNA surveillance machinery and decapping complex.</title>
        <authorList>
            <person name="Cho H."/>
            <person name="Kim K.M."/>
            <person name="Kim Y.K."/>
        </authorList>
    </citation>
    <scope>FUNCTION</scope>
    <scope>SUBCELLULAR LOCATION</scope>
    <scope>INTERACTION WITH UPF1 AND DCP1A</scope>
</reference>
<reference key="8">
    <citation type="journal article" date="2015" name="Proc. Natl. Acad. Sci. U.S.A.">
        <title>Glucocorticoid receptor interacts with PNRC2 in a ligand-dependent manner to recruit UPF1 for rapid mRNA degradation.</title>
        <authorList>
            <person name="Cho H."/>
            <person name="Park O.H."/>
            <person name="Park J."/>
            <person name="Ryu I."/>
            <person name="Kim J."/>
            <person name="Ko J."/>
            <person name="Kim Y.K."/>
        </authorList>
    </citation>
    <scope>FUNCTION</scope>
    <scope>INTERACTION WITH NR3C1; UPF1 AND DCP1A</scope>
    <scope>MUTAGENESIS OF PRO-101; PRO-104; PRO-108 AND TRP-114</scope>
</reference>
<feature type="chain" id="PRO_0000058485" description="Proline-rich nuclear receptor coactivator 2">
    <location>
        <begin position="1"/>
        <end position="139"/>
    </location>
</feature>
<feature type="region of interest" description="Disordered" evidence="2">
    <location>
        <begin position="1"/>
        <end position="51"/>
    </location>
</feature>
<feature type="region of interest" description="Disordered" evidence="2">
    <location>
        <begin position="61"/>
        <end position="80"/>
    </location>
</feature>
<feature type="region of interest" description="Disordered" evidence="2">
    <location>
        <begin position="89"/>
        <end position="110"/>
    </location>
</feature>
<feature type="short sequence motif" description="SH3-binding">
    <location>
        <begin position="99"/>
        <end position="105"/>
    </location>
</feature>
<feature type="compositionally biased region" description="Polar residues" evidence="2">
    <location>
        <begin position="11"/>
        <end position="36"/>
    </location>
</feature>
<feature type="compositionally biased region" description="Polar residues" evidence="2">
    <location>
        <begin position="61"/>
        <end position="79"/>
    </location>
</feature>
<feature type="compositionally biased region" description="Pro residues" evidence="2">
    <location>
        <begin position="101"/>
        <end position="110"/>
    </location>
</feature>
<feature type="splice variant" id="VSP_037463" description="In isoform 2." evidence="7">
    <original>MGGGERYNIPAPQSRNVSKNQQQLNRQKTKEQNSQMKIVHKKKERGHGYNSSAA</original>
    <variation>MLASAPRLNSADRPMKTSVLRQRKGSVRKQHLLSW</variation>
    <location>
        <begin position="1"/>
        <end position="54"/>
    </location>
</feature>
<feature type="mutagenesis site" description="Abolishes the interaction with the nuclear receptors but not decapping enzyme; when associated with A-104." evidence="3 6">
    <original>P</original>
    <variation>A</variation>
    <location>
        <position position="101"/>
    </location>
</feature>
<feature type="mutagenesis site" description="Abolishes the interaction with the nuclear receptors but not decapping enzyme; when associated with A-101." evidence="3 6">
    <original>P</original>
    <variation>A</variation>
    <location>
        <position position="104"/>
    </location>
</feature>
<feature type="mutagenesis site" description="Abolishes the interaction with DCP1A." evidence="6">
    <original>P</original>
    <variation>A</variation>
    <location>
        <position position="108"/>
    </location>
</feature>
<feature type="mutagenesis site" description="Abolishes the interaction with DCP1A." evidence="6">
    <original>W</original>
    <variation>A</variation>
    <location>
        <position position="114"/>
    </location>
</feature>
<feature type="helix" evidence="9">
    <location>
        <begin position="104"/>
        <end position="106"/>
    </location>
</feature>
<feature type="helix" evidence="9">
    <location>
        <begin position="112"/>
        <end position="114"/>
    </location>
</feature>
<name>PNRC2_HUMAN</name>
<organism>
    <name type="scientific">Homo sapiens</name>
    <name type="common">Human</name>
    <dbReference type="NCBI Taxonomy" id="9606"/>
    <lineage>
        <taxon>Eukaryota</taxon>
        <taxon>Metazoa</taxon>
        <taxon>Chordata</taxon>
        <taxon>Craniata</taxon>
        <taxon>Vertebrata</taxon>
        <taxon>Euteleostomi</taxon>
        <taxon>Mammalia</taxon>
        <taxon>Eutheria</taxon>
        <taxon>Euarchontoglires</taxon>
        <taxon>Primates</taxon>
        <taxon>Haplorrhini</taxon>
        <taxon>Catarrhini</taxon>
        <taxon>Hominidae</taxon>
        <taxon>Homo</taxon>
    </lineage>
</organism>
<gene>
    <name type="primary">PNRC2</name>
    <name type="ORF">HSPC208</name>
</gene>
<proteinExistence type="evidence at protein level"/>
<sequence length="139" mass="15591">MGGGERYNIPAPQSRNVSKNQQQLNRQKTKEQNSQMKIVHKKKERGHGYNSSAAAWQAMQNGGKNKNFPNNQSWNSSLSGPRLLFKSQANQNYAGAKFSEPPSPSVLPKPPSHWVPVSFNPSDKEIMTFQLKTLLKVQV</sequence>